<feature type="chain" id="PRO_0000237410" description="Glutamate--tRNA ligase">
    <location>
        <begin position="1"/>
        <end position="477"/>
    </location>
</feature>
<feature type="short sequence motif" description="'HIGH' region" evidence="1">
    <location>
        <begin position="8"/>
        <end position="18"/>
    </location>
</feature>
<feature type="short sequence motif" description="'KMSKS' region" evidence="1">
    <location>
        <begin position="247"/>
        <end position="251"/>
    </location>
</feature>
<feature type="binding site" evidence="1">
    <location>
        <position position="250"/>
    </location>
    <ligand>
        <name>ATP</name>
        <dbReference type="ChEBI" id="CHEBI:30616"/>
    </ligand>
</feature>
<dbReference type="EC" id="6.1.1.17" evidence="1"/>
<dbReference type="EMBL" id="CP000097">
    <property type="protein sequence ID" value="ABB26677.1"/>
    <property type="molecule type" value="Genomic_DNA"/>
</dbReference>
<dbReference type="RefSeq" id="WP_011360485.1">
    <property type="nucleotide sequence ID" value="NC_007513.1"/>
</dbReference>
<dbReference type="SMR" id="Q3AWM6"/>
<dbReference type="STRING" id="316279.Syncc9902_1719"/>
<dbReference type="KEGG" id="sye:Syncc9902_1719"/>
<dbReference type="eggNOG" id="COG0008">
    <property type="taxonomic scope" value="Bacteria"/>
</dbReference>
<dbReference type="HOGENOM" id="CLU_015768_6_0_3"/>
<dbReference type="OrthoDB" id="9807503at2"/>
<dbReference type="Proteomes" id="UP000002712">
    <property type="component" value="Chromosome"/>
</dbReference>
<dbReference type="GO" id="GO:0005829">
    <property type="term" value="C:cytosol"/>
    <property type="evidence" value="ECO:0007669"/>
    <property type="project" value="TreeGrafter"/>
</dbReference>
<dbReference type="GO" id="GO:0005524">
    <property type="term" value="F:ATP binding"/>
    <property type="evidence" value="ECO:0007669"/>
    <property type="project" value="UniProtKB-UniRule"/>
</dbReference>
<dbReference type="GO" id="GO:0004818">
    <property type="term" value="F:glutamate-tRNA ligase activity"/>
    <property type="evidence" value="ECO:0007669"/>
    <property type="project" value="UniProtKB-UniRule"/>
</dbReference>
<dbReference type="GO" id="GO:0000049">
    <property type="term" value="F:tRNA binding"/>
    <property type="evidence" value="ECO:0007669"/>
    <property type="project" value="InterPro"/>
</dbReference>
<dbReference type="GO" id="GO:0008270">
    <property type="term" value="F:zinc ion binding"/>
    <property type="evidence" value="ECO:0007669"/>
    <property type="project" value="InterPro"/>
</dbReference>
<dbReference type="GO" id="GO:0006424">
    <property type="term" value="P:glutamyl-tRNA aminoacylation"/>
    <property type="evidence" value="ECO:0007669"/>
    <property type="project" value="UniProtKB-UniRule"/>
</dbReference>
<dbReference type="CDD" id="cd00808">
    <property type="entry name" value="GluRS_core"/>
    <property type="match status" value="1"/>
</dbReference>
<dbReference type="FunFam" id="3.40.50.620:FF:000007">
    <property type="entry name" value="Glutamate--tRNA ligase"/>
    <property type="match status" value="1"/>
</dbReference>
<dbReference type="Gene3D" id="1.10.10.350">
    <property type="match status" value="1"/>
</dbReference>
<dbReference type="Gene3D" id="1.10.8.70">
    <property type="entry name" value="Glutamate-tRNA synthetase, class I, anticodon-binding domain 1"/>
    <property type="match status" value="1"/>
</dbReference>
<dbReference type="Gene3D" id="1.10.1160.10">
    <property type="entry name" value="Glutamyl-trna Synthetase, Domain 2"/>
    <property type="match status" value="1"/>
</dbReference>
<dbReference type="Gene3D" id="3.90.800.10">
    <property type="entry name" value="Glutamyl-tRNA Synthetase, Domain 3"/>
    <property type="match status" value="1"/>
</dbReference>
<dbReference type="Gene3D" id="3.40.50.620">
    <property type="entry name" value="HUPs"/>
    <property type="match status" value="1"/>
</dbReference>
<dbReference type="HAMAP" id="MF_00022">
    <property type="entry name" value="Glu_tRNA_synth_type1"/>
    <property type="match status" value="1"/>
</dbReference>
<dbReference type="InterPro" id="IPR045462">
    <property type="entry name" value="aa-tRNA-synth_I_cd-bd"/>
</dbReference>
<dbReference type="InterPro" id="IPR020751">
    <property type="entry name" value="aa-tRNA-synth_I_codon-bd_sub2"/>
</dbReference>
<dbReference type="InterPro" id="IPR001412">
    <property type="entry name" value="aa-tRNA-synth_I_CS"/>
</dbReference>
<dbReference type="InterPro" id="IPR008925">
    <property type="entry name" value="aa_tRNA-synth_I_cd-bd_sf"/>
</dbReference>
<dbReference type="InterPro" id="IPR004527">
    <property type="entry name" value="Glu-tRNA-ligase_bac/mito"/>
</dbReference>
<dbReference type="InterPro" id="IPR020752">
    <property type="entry name" value="Glu-tRNA-synth_I_codon-bd_sub1"/>
</dbReference>
<dbReference type="InterPro" id="IPR000924">
    <property type="entry name" value="Glu/Gln-tRNA-synth"/>
</dbReference>
<dbReference type="InterPro" id="IPR020058">
    <property type="entry name" value="Glu/Gln-tRNA-synth_Ib_cat-dom"/>
</dbReference>
<dbReference type="InterPro" id="IPR020061">
    <property type="entry name" value="Glu_tRNA_lig_a-bdl"/>
</dbReference>
<dbReference type="InterPro" id="IPR049940">
    <property type="entry name" value="GluQ/Sye"/>
</dbReference>
<dbReference type="InterPro" id="IPR033910">
    <property type="entry name" value="GluRS_core"/>
</dbReference>
<dbReference type="InterPro" id="IPR014729">
    <property type="entry name" value="Rossmann-like_a/b/a_fold"/>
</dbReference>
<dbReference type="NCBIfam" id="TIGR00464">
    <property type="entry name" value="gltX_bact"/>
    <property type="match status" value="1"/>
</dbReference>
<dbReference type="NCBIfam" id="NF004315">
    <property type="entry name" value="PRK05710.1-4"/>
    <property type="match status" value="1"/>
</dbReference>
<dbReference type="PANTHER" id="PTHR43311">
    <property type="entry name" value="GLUTAMATE--TRNA LIGASE"/>
    <property type="match status" value="1"/>
</dbReference>
<dbReference type="PANTHER" id="PTHR43311:SF2">
    <property type="entry name" value="GLUTAMATE--TRNA LIGASE, MITOCHONDRIAL-RELATED"/>
    <property type="match status" value="1"/>
</dbReference>
<dbReference type="Pfam" id="PF19269">
    <property type="entry name" value="Anticodon_2"/>
    <property type="match status" value="1"/>
</dbReference>
<dbReference type="Pfam" id="PF00749">
    <property type="entry name" value="tRNA-synt_1c"/>
    <property type="match status" value="1"/>
</dbReference>
<dbReference type="PRINTS" id="PR00987">
    <property type="entry name" value="TRNASYNTHGLU"/>
</dbReference>
<dbReference type="SUPFAM" id="SSF48163">
    <property type="entry name" value="An anticodon-binding domain of class I aminoacyl-tRNA synthetases"/>
    <property type="match status" value="1"/>
</dbReference>
<dbReference type="SUPFAM" id="SSF52374">
    <property type="entry name" value="Nucleotidylyl transferase"/>
    <property type="match status" value="1"/>
</dbReference>
<dbReference type="PROSITE" id="PS00178">
    <property type="entry name" value="AA_TRNA_LIGASE_I"/>
    <property type="match status" value="1"/>
</dbReference>
<keyword id="KW-0030">Aminoacyl-tRNA synthetase</keyword>
<keyword id="KW-0067">ATP-binding</keyword>
<keyword id="KW-0963">Cytoplasm</keyword>
<keyword id="KW-0436">Ligase</keyword>
<keyword id="KW-0547">Nucleotide-binding</keyword>
<keyword id="KW-0648">Protein biosynthesis</keyword>
<keyword id="KW-1185">Reference proteome</keyword>
<evidence type="ECO:0000255" key="1">
    <source>
        <dbReference type="HAMAP-Rule" id="MF_00022"/>
    </source>
</evidence>
<gene>
    <name evidence="1" type="primary">gltX</name>
    <name type="ordered locus">Syncc9902_1719</name>
</gene>
<protein>
    <recommendedName>
        <fullName evidence="1">Glutamate--tRNA ligase</fullName>
        <ecNumber evidence="1">6.1.1.17</ecNumber>
    </recommendedName>
    <alternativeName>
        <fullName evidence="1">Glutamyl-tRNA synthetase</fullName>
        <shortName evidence="1">GluRS</shortName>
    </alternativeName>
</protein>
<organism>
    <name type="scientific">Synechococcus sp. (strain CC9902)</name>
    <dbReference type="NCBI Taxonomy" id="316279"/>
    <lineage>
        <taxon>Bacteria</taxon>
        <taxon>Bacillati</taxon>
        <taxon>Cyanobacteriota</taxon>
        <taxon>Cyanophyceae</taxon>
        <taxon>Synechococcales</taxon>
        <taxon>Synechococcaceae</taxon>
        <taxon>Synechococcus</taxon>
    </lineage>
</organism>
<name>SYE_SYNS9</name>
<comment type="function">
    <text evidence="1">Catalyzes the attachment of glutamate to tRNA(Glu) in a two-step reaction: glutamate is first activated by ATP to form Glu-AMP and then transferred to the acceptor end of tRNA(Glu).</text>
</comment>
<comment type="catalytic activity">
    <reaction evidence="1">
        <text>tRNA(Glu) + L-glutamate + ATP = L-glutamyl-tRNA(Glu) + AMP + diphosphate</text>
        <dbReference type="Rhea" id="RHEA:23540"/>
        <dbReference type="Rhea" id="RHEA-COMP:9663"/>
        <dbReference type="Rhea" id="RHEA-COMP:9680"/>
        <dbReference type="ChEBI" id="CHEBI:29985"/>
        <dbReference type="ChEBI" id="CHEBI:30616"/>
        <dbReference type="ChEBI" id="CHEBI:33019"/>
        <dbReference type="ChEBI" id="CHEBI:78442"/>
        <dbReference type="ChEBI" id="CHEBI:78520"/>
        <dbReference type="ChEBI" id="CHEBI:456215"/>
        <dbReference type="EC" id="6.1.1.17"/>
    </reaction>
</comment>
<comment type="subunit">
    <text evidence="1">Monomer.</text>
</comment>
<comment type="subcellular location">
    <subcellularLocation>
        <location evidence="1">Cytoplasm</location>
    </subcellularLocation>
</comment>
<comment type="similarity">
    <text evidence="1">Belongs to the class-I aminoacyl-tRNA synthetase family. Glutamate--tRNA ligase type 1 subfamily.</text>
</comment>
<sequence>MVRVRLAPSPTGTLHIGTARTAVFNWLYAKSQNGDFLLRIEDTDKERSKPEFTQNILEGLQWLGIDWAEDPVIQSERVAQHRDAIRALLEKGLAYRCYANESELATMRDAQKASNQPPRYDNRHRNLTKEQETAYQAEGRDAVIRFRIDDDADIHWNDLVRGTMRWRGGDLGGDMVVARRAPADQIGDPLYNLVVVVDDAAMEITHVIRGEDHIANTAKQLLLYEALGLPSPTFAHAPLILNADGKKLSKRDGVTSINEFRSMGYTAEAIANYMTLLGWSVPEGMEERFTLREAADQFSFDRVNKAGARFDWDKLNWLNAQVLHSWSSAQLLDVLRPLWLKNGWTIPNDNGWALELCELLGPSLTLLNDGLDQAAPFFECPDLEDDGLKQLQSEGAKAAISHLIDALQAERWMGTDFDQAQTLLGDAAKAAGVKKGVMMKSLRAALLGRLQGPDLLTTWSLLAKNSDDLPRLQRCLS</sequence>
<reference key="1">
    <citation type="submission" date="2005-08" db="EMBL/GenBank/DDBJ databases">
        <title>Complete sequence of Synechococcus sp. CC9902.</title>
        <authorList>
            <person name="Copeland A."/>
            <person name="Lucas S."/>
            <person name="Lapidus A."/>
            <person name="Barry K."/>
            <person name="Detter J.C."/>
            <person name="Glavina T."/>
            <person name="Hammon N."/>
            <person name="Israni S."/>
            <person name="Pitluck S."/>
            <person name="Martinez M."/>
            <person name="Schmutz J."/>
            <person name="Larimer F."/>
            <person name="Land M."/>
            <person name="Kyrpides N."/>
            <person name="Ivanova N."/>
            <person name="Richardson P."/>
        </authorList>
    </citation>
    <scope>NUCLEOTIDE SEQUENCE [LARGE SCALE GENOMIC DNA]</scope>
    <source>
        <strain>CC9902</strain>
    </source>
</reference>
<proteinExistence type="inferred from homology"/>
<accession>Q3AWM6</accession>